<reference key="1">
    <citation type="journal article" date="2006" name="Proc. Natl. Acad. Sci. U.S.A.">
        <title>The complete genome of Rhodococcus sp. RHA1 provides insights into a catabolic powerhouse.</title>
        <authorList>
            <person name="McLeod M.P."/>
            <person name="Warren R.L."/>
            <person name="Hsiao W.W.L."/>
            <person name="Araki N."/>
            <person name="Myhre M."/>
            <person name="Fernandes C."/>
            <person name="Miyazawa D."/>
            <person name="Wong W."/>
            <person name="Lillquist A.L."/>
            <person name="Wang D."/>
            <person name="Dosanjh M."/>
            <person name="Hara H."/>
            <person name="Petrescu A."/>
            <person name="Morin R.D."/>
            <person name="Yang G."/>
            <person name="Stott J.M."/>
            <person name="Schein J.E."/>
            <person name="Shin H."/>
            <person name="Smailus D."/>
            <person name="Siddiqui A.S."/>
            <person name="Marra M.A."/>
            <person name="Jones S.J.M."/>
            <person name="Holt R."/>
            <person name="Brinkman F.S.L."/>
            <person name="Miyauchi K."/>
            <person name="Fukuda M."/>
            <person name="Davies J.E."/>
            <person name="Mohn W.W."/>
            <person name="Eltis L.D."/>
        </authorList>
    </citation>
    <scope>NUCLEOTIDE SEQUENCE [LARGE SCALE GENOMIC DNA]</scope>
    <source>
        <strain>RHA1</strain>
    </source>
</reference>
<sequence>MLISQRPTLTEEVIADNRSKFVIEPLEPGFGYTLGNSLRRTLLSSIPGAAVTSIRIDGVLHEFTTVPGVKEDVTDIILNLKGLVVSSEEDEPVTMYVRKQGPGAVTAGDIVPPAGVTVNNPDLHIATLNDKGKLEIELVVERGRGYVPAVQNKASGAEIGRIPVDSIYSPVLKVTYKVEATRVEQRTDFDRLVLDVETKNSITARDALASAGKTLVELFGLARELNVEAEGIEIGPSPAEADHIASFGLPIEDLDLTVRSYNCLKREGVHTVGELVGRTESDLLDIRNFGQKSIDEVKVKLHSLGLALKDSPASFDPTTVAGYDAATGTWSDTDAGSFGDAEGTEDYAETEQL</sequence>
<keyword id="KW-0240">DNA-directed RNA polymerase</keyword>
<keyword id="KW-0548">Nucleotidyltransferase</keyword>
<keyword id="KW-0804">Transcription</keyword>
<keyword id="KW-0808">Transferase</keyword>
<gene>
    <name evidence="1" type="primary">rpoA</name>
    <name type="ordered locus">RHA1_ro06162</name>
</gene>
<dbReference type="EC" id="2.7.7.6" evidence="1"/>
<dbReference type="EMBL" id="CP000431">
    <property type="protein sequence ID" value="ABG97939.1"/>
    <property type="molecule type" value="Genomic_DNA"/>
</dbReference>
<dbReference type="RefSeq" id="WP_005239684.1">
    <property type="nucleotide sequence ID" value="NC_008268.1"/>
</dbReference>
<dbReference type="SMR" id="Q0S3E7"/>
<dbReference type="KEGG" id="rha:RHA1_ro06162"/>
<dbReference type="eggNOG" id="COG0202">
    <property type="taxonomic scope" value="Bacteria"/>
</dbReference>
<dbReference type="HOGENOM" id="CLU_053084_0_1_11"/>
<dbReference type="OrthoDB" id="9805706at2"/>
<dbReference type="Proteomes" id="UP000008710">
    <property type="component" value="Chromosome"/>
</dbReference>
<dbReference type="GO" id="GO:0005737">
    <property type="term" value="C:cytoplasm"/>
    <property type="evidence" value="ECO:0007669"/>
    <property type="project" value="UniProtKB-ARBA"/>
</dbReference>
<dbReference type="GO" id="GO:0000428">
    <property type="term" value="C:DNA-directed RNA polymerase complex"/>
    <property type="evidence" value="ECO:0007669"/>
    <property type="project" value="UniProtKB-KW"/>
</dbReference>
<dbReference type="GO" id="GO:0003677">
    <property type="term" value="F:DNA binding"/>
    <property type="evidence" value="ECO:0007669"/>
    <property type="project" value="UniProtKB-UniRule"/>
</dbReference>
<dbReference type="GO" id="GO:0003899">
    <property type="term" value="F:DNA-directed RNA polymerase activity"/>
    <property type="evidence" value="ECO:0007669"/>
    <property type="project" value="UniProtKB-UniRule"/>
</dbReference>
<dbReference type="GO" id="GO:0046983">
    <property type="term" value="F:protein dimerization activity"/>
    <property type="evidence" value="ECO:0007669"/>
    <property type="project" value="InterPro"/>
</dbReference>
<dbReference type="GO" id="GO:0006351">
    <property type="term" value="P:DNA-templated transcription"/>
    <property type="evidence" value="ECO:0007669"/>
    <property type="project" value="UniProtKB-UniRule"/>
</dbReference>
<dbReference type="CDD" id="cd06928">
    <property type="entry name" value="RNAP_alpha_NTD"/>
    <property type="match status" value="1"/>
</dbReference>
<dbReference type="FunFam" id="1.10.150.20:FF:000001">
    <property type="entry name" value="DNA-directed RNA polymerase subunit alpha"/>
    <property type="match status" value="1"/>
</dbReference>
<dbReference type="FunFam" id="2.170.120.12:FF:000001">
    <property type="entry name" value="DNA-directed RNA polymerase subunit alpha"/>
    <property type="match status" value="1"/>
</dbReference>
<dbReference type="Gene3D" id="1.10.150.20">
    <property type="entry name" value="5' to 3' exonuclease, C-terminal subdomain"/>
    <property type="match status" value="1"/>
</dbReference>
<dbReference type="Gene3D" id="2.170.120.12">
    <property type="entry name" value="DNA-directed RNA polymerase, insert domain"/>
    <property type="match status" value="1"/>
</dbReference>
<dbReference type="Gene3D" id="3.30.1360.10">
    <property type="entry name" value="RNA polymerase, RBP11-like subunit"/>
    <property type="match status" value="1"/>
</dbReference>
<dbReference type="HAMAP" id="MF_00059">
    <property type="entry name" value="RNApol_bact_RpoA"/>
    <property type="match status" value="1"/>
</dbReference>
<dbReference type="InterPro" id="IPR011262">
    <property type="entry name" value="DNA-dir_RNA_pol_insert"/>
</dbReference>
<dbReference type="InterPro" id="IPR011263">
    <property type="entry name" value="DNA-dir_RNA_pol_RpoA/D/Rpb3"/>
</dbReference>
<dbReference type="InterPro" id="IPR011773">
    <property type="entry name" value="DNA-dir_RpoA"/>
</dbReference>
<dbReference type="InterPro" id="IPR036603">
    <property type="entry name" value="RBP11-like"/>
</dbReference>
<dbReference type="InterPro" id="IPR011260">
    <property type="entry name" value="RNAP_asu_C"/>
</dbReference>
<dbReference type="InterPro" id="IPR036643">
    <property type="entry name" value="RNApol_insert_sf"/>
</dbReference>
<dbReference type="NCBIfam" id="NF003513">
    <property type="entry name" value="PRK05182.1-2"/>
    <property type="match status" value="1"/>
</dbReference>
<dbReference type="NCBIfam" id="NF003514">
    <property type="entry name" value="PRK05182.1-4"/>
    <property type="match status" value="1"/>
</dbReference>
<dbReference type="NCBIfam" id="NF003519">
    <property type="entry name" value="PRK05182.2-5"/>
    <property type="match status" value="1"/>
</dbReference>
<dbReference type="NCBIfam" id="TIGR02027">
    <property type="entry name" value="rpoA"/>
    <property type="match status" value="1"/>
</dbReference>
<dbReference type="Pfam" id="PF01000">
    <property type="entry name" value="RNA_pol_A_bac"/>
    <property type="match status" value="1"/>
</dbReference>
<dbReference type="Pfam" id="PF03118">
    <property type="entry name" value="RNA_pol_A_CTD"/>
    <property type="match status" value="1"/>
</dbReference>
<dbReference type="Pfam" id="PF01193">
    <property type="entry name" value="RNA_pol_L"/>
    <property type="match status" value="1"/>
</dbReference>
<dbReference type="SMART" id="SM00662">
    <property type="entry name" value="RPOLD"/>
    <property type="match status" value="1"/>
</dbReference>
<dbReference type="SUPFAM" id="SSF47789">
    <property type="entry name" value="C-terminal domain of RNA polymerase alpha subunit"/>
    <property type="match status" value="1"/>
</dbReference>
<dbReference type="SUPFAM" id="SSF56553">
    <property type="entry name" value="Insert subdomain of RNA polymerase alpha subunit"/>
    <property type="match status" value="1"/>
</dbReference>
<dbReference type="SUPFAM" id="SSF55257">
    <property type="entry name" value="RBP11-like subunits of RNA polymerase"/>
    <property type="match status" value="1"/>
</dbReference>
<evidence type="ECO:0000255" key="1">
    <source>
        <dbReference type="HAMAP-Rule" id="MF_00059"/>
    </source>
</evidence>
<evidence type="ECO:0000256" key="2">
    <source>
        <dbReference type="SAM" id="MobiDB-lite"/>
    </source>
</evidence>
<accession>Q0S3E7</accession>
<proteinExistence type="inferred from homology"/>
<organism>
    <name type="scientific">Rhodococcus jostii (strain RHA1)</name>
    <dbReference type="NCBI Taxonomy" id="101510"/>
    <lineage>
        <taxon>Bacteria</taxon>
        <taxon>Bacillati</taxon>
        <taxon>Actinomycetota</taxon>
        <taxon>Actinomycetes</taxon>
        <taxon>Mycobacteriales</taxon>
        <taxon>Nocardiaceae</taxon>
        <taxon>Rhodococcus</taxon>
    </lineage>
</organism>
<protein>
    <recommendedName>
        <fullName evidence="1">DNA-directed RNA polymerase subunit alpha</fullName>
        <shortName evidence="1">RNAP subunit alpha</shortName>
        <ecNumber evidence="1">2.7.7.6</ecNumber>
    </recommendedName>
    <alternativeName>
        <fullName evidence="1">RNA polymerase subunit alpha</fullName>
    </alternativeName>
    <alternativeName>
        <fullName evidence="1">Transcriptase subunit alpha</fullName>
    </alternativeName>
</protein>
<name>RPOA_RHOJR</name>
<feature type="chain" id="PRO_0000264532" description="DNA-directed RNA polymerase subunit alpha">
    <location>
        <begin position="1"/>
        <end position="353"/>
    </location>
</feature>
<feature type="region of interest" description="Alpha N-terminal domain (alpha-NTD)" evidence="1">
    <location>
        <begin position="1"/>
        <end position="226"/>
    </location>
</feature>
<feature type="region of interest" description="Alpha C-terminal domain (alpha-CTD)" evidence="1">
    <location>
        <begin position="241"/>
        <end position="353"/>
    </location>
</feature>
<feature type="region of interest" description="Disordered" evidence="2">
    <location>
        <begin position="326"/>
        <end position="353"/>
    </location>
</feature>
<feature type="compositionally biased region" description="Acidic residues" evidence="2">
    <location>
        <begin position="342"/>
        <end position="353"/>
    </location>
</feature>
<comment type="function">
    <text evidence="1">DNA-dependent RNA polymerase catalyzes the transcription of DNA into RNA using the four ribonucleoside triphosphates as substrates.</text>
</comment>
<comment type="catalytic activity">
    <reaction evidence="1">
        <text>RNA(n) + a ribonucleoside 5'-triphosphate = RNA(n+1) + diphosphate</text>
        <dbReference type="Rhea" id="RHEA:21248"/>
        <dbReference type="Rhea" id="RHEA-COMP:14527"/>
        <dbReference type="Rhea" id="RHEA-COMP:17342"/>
        <dbReference type="ChEBI" id="CHEBI:33019"/>
        <dbReference type="ChEBI" id="CHEBI:61557"/>
        <dbReference type="ChEBI" id="CHEBI:140395"/>
        <dbReference type="EC" id="2.7.7.6"/>
    </reaction>
</comment>
<comment type="subunit">
    <text evidence="1">Homodimer. The RNAP catalytic core consists of 2 alpha, 1 beta, 1 beta' and 1 omega subunit. When a sigma factor is associated with the core the holoenzyme is formed, which can initiate transcription.</text>
</comment>
<comment type="domain">
    <text evidence="1">The N-terminal domain is essential for RNAP assembly and basal transcription, whereas the C-terminal domain is involved in interaction with transcriptional regulators and with upstream promoter elements.</text>
</comment>
<comment type="similarity">
    <text evidence="1">Belongs to the RNA polymerase alpha chain family.</text>
</comment>